<feature type="signal peptide" evidence="2">
    <location>
        <begin position="1"/>
        <end position="18"/>
    </location>
</feature>
<feature type="chain" id="PRO_0000015036" description="Natural cytotoxicity triggering receptor 3">
    <location>
        <begin position="19"/>
        <end position="192"/>
    </location>
</feature>
<feature type="topological domain" description="Extracellular" evidence="2">
    <location>
        <begin position="19"/>
        <end position="147"/>
    </location>
</feature>
<feature type="transmembrane region" description="Helical" evidence="2">
    <location>
        <begin position="148"/>
        <end position="168"/>
    </location>
</feature>
<feature type="topological domain" description="Cytoplasmic" evidence="2">
    <location>
        <begin position="169"/>
        <end position="192"/>
    </location>
</feature>
<feature type="domain" description="Ig-like">
    <location>
        <begin position="19"/>
        <end position="126"/>
    </location>
</feature>
<feature type="glycosylation site" description="N-linked (GlcNAc...) asparagine" evidence="2">
    <location>
        <position position="42"/>
    </location>
</feature>
<feature type="glycosylation site" description="N-linked (GlcNAc...) asparagine" evidence="2">
    <location>
        <position position="121"/>
    </location>
</feature>
<feature type="disulfide bond" evidence="3">
    <location>
        <begin position="39"/>
        <end position="108"/>
    </location>
</feature>
<feature type="sequence variant" evidence="4">
    <original>I</original>
    <variation>V</variation>
    <location>
        <position position="7"/>
    </location>
</feature>
<feature type="sequence variant" evidence="4">
    <original>I</original>
    <variation>V</variation>
    <location>
        <position position="19"/>
    </location>
</feature>
<feature type="sequence variant" evidence="4">
    <original>A</original>
    <variation>V</variation>
    <location>
        <position position="82"/>
    </location>
</feature>
<feature type="sequence variant" evidence="4">
    <original>A</original>
    <variation>T</variation>
    <location>
        <position position="138"/>
    </location>
</feature>
<feature type="sequence conflict" description="In Ref. 2; AAP13457." evidence="5" ref="2">
    <original>A</original>
    <variation>V</variation>
    <location>
        <position position="135"/>
    </location>
</feature>
<protein>
    <recommendedName>
        <fullName>Natural cytotoxicity triggering receptor 3</fullName>
    </recommendedName>
    <alternativeName>
        <fullName>Natural killer cell p30-related protein</fullName>
        <shortName>NK-p30</shortName>
        <shortName>NKp30</shortName>
    </alternativeName>
    <cdAntigenName>CD337</cdAntigenName>
</protein>
<sequence length="192" mass="20470">MAKVLLIVFIMVYAGSCAIWVSQPPEIRAQEGTTASLPCSFNASRGKAAIGSATWYQDKVAPGMELSNVTPGFRGRVASFSASQFIRGHKAGLLIQDIQSHDARIYVCRVEVLGLGVGTGNGTRLVVEKEPPQQASNAEPERAAYTSLLLRAGVYALSFLSVATGSVIYYQGKCLCHVGNTATPPTASEERF</sequence>
<accession>Q8CFD9</accession>
<accession>Q80WM8</accession>
<accession>Q8CG11</accession>
<evidence type="ECO:0000250" key="1">
    <source>
        <dbReference type="UniProtKB" id="O14931"/>
    </source>
</evidence>
<evidence type="ECO:0000255" key="2"/>
<evidence type="ECO:0000255" key="3">
    <source>
        <dbReference type="PROSITE-ProRule" id="PRU00114"/>
    </source>
</evidence>
<evidence type="ECO:0000269" key="4">
    <source>
    </source>
</evidence>
<evidence type="ECO:0000305" key="5"/>
<reference key="1">
    <citation type="journal article" date="2003" name="Eur. J. Immunol.">
        <title>Molecular characterization of the novel rat NK receptor 1C7.</title>
        <authorList>
            <person name="Backman-Petersson E."/>
            <person name="Miller J.R."/>
            <person name="Hollyoake M."/>
            <person name="Aguado B."/>
            <person name="Butcher G.W."/>
        </authorList>
    </citation>
    <scope>NUCLEOTIDE SEQUENCE</scope>
    <scope>VARIANTS VAL-7; VAL-19; VAL-82 AND THR-138</scope>
    <source>
        <strain>PVG</strain>
        <tissue>Natural killer cell</tissue>
    </source>
</reference>
<reference key="2">
    <citation type="journal article" date="2002" name="Transpl. Immunol.">
        <title>NK cells and transplantation.</title>
        <authorList>
            <person name="Hsieh C.L."/>
            <person name="Obara H."/>
            <person name="Ogura Y."/>
            <person name="Martinez O.M."/>
            <person name="Krams S.M."/>
        </authorList>
    </citation>
    <scope>NUCLEOTIDE SEQUENCE [GENOMIC DNA]</scope>
    <source>
        <strain>Lewis</strain>
    </source>
</reference>
<reference key="3">
    <citation type="journal article" date="2004" name="Genome Res.">
        <title>The genomic sequence and comparative analysis of the rat major histocompatibility complex.</title>
        <authorList>
            <person name="Hurt P."/>
            <person name="Walter L."/>
            <person name="Sudbrak R."/>
            <person name="Klages S."/>
            <person name="Mueller I."/>
            <person name="Shiina T."/>
            <person name="Inoko H."/>
            <person name="Lehrach H."/>
            <person name="Guenther E."/>
            <person name="Reinhardt R."/>
            <person name="Himmelbauer H."/>
        </authorList>
    </citation>
    <scope>NUCLEOTIDE SEQUENCE [LARGE SCALE GENOMIC DNA]</scope>
    <source>
        <strain>Brown Norway</strain>
    </source>
</reference>
<dbReference type="EMBL" id="AJ430418">
    <property type="protein sequence ID" value="CAD23066.1"/>
    <property type="molecule type" value="mRNA"/>
</dbReference>
<dbReference type="EMBL" id="AJ430419">
    <property type="protein sequence ID" value="CAD23067.2"/>
    <property type="molecule type" value="Genomic_DNA"/>
</dbReference>
<dbReference type="EMBL" id="AJ430420">
    <property type="protein sequence ID" value="CAD23067.2"/>
    <property type="status" value="JOINED"/>
    <property type="molecule type" value="Genomic_DNA"/>
</dbReference>
<dbReference type="EMBL" id="AY273824">
    <property type="protein sequence ID" value="AAP13457.1"/>
    <property type="molecule type" value="mRNA"/>
</dbReference>
<dbReference type="EMBL" id="BX883046">
    <property type="protein sequence ID" value="CAE84000.1"/>
    <property type="molecule type" value="Genomic_DNA"/>
</dbReference>
<dbReference type="SMR" id="Q8CFD9"/>
<dbReference type="FunCoup" id="Q8CFD9">
    <property type="interactions" value="419"/>
</dbReference>
<dbReference type="STRING" id="10116.ENSRNOP00000001139"/>
<dbReference type="GlyCosmos" id="Q8CFD9">
    <property type="glycosylation" value="2 sites, No reported glycans"/>
</dbReference>
<dbReference type="GlyGen" id="Q8CFD9">
    <property type="glycosylation" value="3 sites"/>
</dbReference>
<dbReference type="PaxDb" id="10116-ENSRNOP00000001139"/>
<dbReference type="UCSC" id="RGD:727881">
    <property type="organism name" value="rat"/>
</dbReference>
<dbReference type="AGR" id="RGD:727881"/>
<dbReference type="RGD" id="727881">
    <property type="gene designation" value="Ncr3"/>
</dbReference>
<dbReference type="eggNOG" id="ENOG502SGFD">
    <property type="taxonomic scope" value="Eukaryota"/>
</dbReference>
<dbReference type="InParanoid" id="Q8CFD9"/>
<dbReference type="PhylomeDB" id="Q8CFD9"/>
<dbReference type="TreeFam" id="TF337790"/>
<dbReference type="PRO" id="PR:Q8CFD9"/>
<dbReference type="Proteomes" id="UP000002494">
    <property type="component" value="Unplaced"/>
</dbReference>
<dbReference type="GO" id="GO:0005886">
    <property type="term" value="C:plasma membrane"/>
    <property type="evidence" value="ECO:0000266"/>
    <property type="project" value="RGD"/>
</dbReference>
<dbReference type="GO" id="GO:0042802">
    <property type="term" value="F:identical protein binding"/>
    <property type="evidence" value="ECO:0000266"/>
    <property type="project" value="RGD"/>
</dbReference>
<dbReference type="GO" id="GO:0140375">
    <property type="term" value="F:immune receptor activity"/>
    <property type="evidence" value="ECO:0000266"/>
    <property type="project" value="RGD"/>
</dbReference>
<dbReference type="GO" id="GO:0002429">
    <property type="term" value="P:immune response-activating cell surface receptor signaling pathway"/>
    <property type="evidence" value="ECO:0000250"/>
    <property type="project" value="UniProtKB"/>
</dbReference>
<dbReference type="GO" id="GO:0030101">
    <property type="term" value="P:natural killer cell activation"/>
    <property type="evidence" value="ECO:0000250"/>
    <property type="project" value="UniProtKB"/>
</dbReference>
<dbReference type="GO" id="GO:0051132">
    <property type="term" value="P:NK T cell activation"/>
    <property type="evidence" value="ECO:0000266"/>
    <property type="project" value="RGD"/>
</dbReference>
<dbReference type="GO" id="GO:0045954">
    <property type="term" value="P:positive regulation of natural killer cell mediated cytotoxicity"/>
    <property type="evidence" value="ECO:0000266"/>
    <property type="project" value="RGD"/>
</dbReference>
<dbReference type="CDD" id="cd20926">
    <property type="entry name" value="IgV_NKp30"/>
    <property type="match status" value="1"/>
</dbReference>
<dbReference type="Gene3D" id="2.60.40.10">
    <property type="entry name" value="Immunoglobulins"/>
    <property type="match status" value="1"/>
</dbReference>
<dbReference type="InterPro" id="IPR007110">
    <property type="entry name" value="Ig-like_dom"/>
</dbReference>
<dbReference type="InterPro" id="IPR036179">
    <property type="entry name" value="Ig-like_dom_sf"/>
</dbReference>
<dbReference type="InterPro" id="IPR013783">
    <property type="entry name" value="Ig-like_fold"/>
</dbReference>
<dbReference type="InterPro" id="IPR003599">
    <property type="entry name" value="Ig_sub"/>
</dbReference>
<dbReference type="InterPro" id="IPR013106">
    <property type="entry name" value="Ig_V-set"/>
</dbReference>
<dbReference type="InterPro" id="IPR043226">
    <property type="entry name" value="NCR3"/>
</dbReference>
<dbReference type="PANTHER" id="PTHR47904">
    <property type="entry name" value="NATURAL CYTOTOXICITY TRIGGERING RECEPTOR 3"/>
    <property type="match status" value="1"/>
</dbReference>
<dbReference type="PANTHER" id="PTHR47904:SF1">
    <property type="entry name" value="NATURAL CYTOTOXICITY TRIGGERING RECEPTOR 3"/>
    <property type="match status" value="1"/>
</dbReference>
<dbReference type="Pfam" id="PF07686">
    <property type="entry name" value="V-set"/>
    <property type="match status" value="1"/>
</dbReference>
<dbReference type="SMART" id="SM00409">
    <property type="entry name" value="IG"/>
    <property type="match status" value="1"/>
</dbReference>
<dbReference type="SUPFAM" id="SSF48726">
    <property type="entry name" value="Immunoglobulin"/>
    <property type="match status" value="1"/>
</dbReference>
<dbReference type="PROSITE" id="PS50835">
    <property type="entry name" value="IG_LIKE"/>
    <property type="match status" value="1"/>
</dbReference>
<organism>
    <name type="scientific">Rattus norvegicus</name>
    <name type="common">Rat</name>
    <dbReference type="NCBI Taxonomy" id="10116"/>
    <lineage>
        <taxon>Eukaryota</taxon>
        <taxon>Metazoa</taxon>
        <taxon>Chordata</taxon>
        <taxon>Craniata</taxon>
        <taxon>Vertebrata</taxon>
        <taxon>Euteleostomi</taxon>
        <taxon>Mammalia</taxon>
        <taxon>Eutheria</taxon>
        <taxon>Euarchontoglires</taxon>
        <taxon>Glires</taxon>
        <taxon>Rodentia</taxon>
        <taxon>Myomorpha</taxon>
        <taxon>Muroidea</taxon>
        <taxon>Muridae</taxon>
        <taxon>Murinae</taxon>
        <taxon>Rattus</taxon>
    </lineage>
</organism>
<name>NCTR3_RAT</name>
<keyword id="KW-1003">Cell membrane</keyword>
<keyword id="KW-1015">Disulfide bond</keyword>
<keyword id="KW-0325">Glycoprotein</keyword>
<keyword id="KW-0391">Immunity</keyword>
<keyword id="KW-0393">Immunoglobulin domain</keyword>
<keyword id="KW-0472">Membrane</keyword>
<keyword id="KW-0675">Receptor</keyword>
<keyword id="KW-1185">Reference proteome</keyword>
<keyword id="KW-0732">Signal</keyword>
<keyword id="KW-0812">Transmembrane</keyword>
<keyword id="KW-1133">Transmembrane helix</keyword>
<proteinExistence type="evidence at transcript level"/>
<gene>
    <name type="primary">Ncr3</name>
    <name type="synonym">1c7</name>
</gene>
<comment type="function">
    <text evidence="1">Cell membrane receptor of natural killer/NK cells that is activated by binding of extracellular ligands including BAG6 and NCR3LG1. Stimulates NK cells cytotoxicity toward neighboring cells producing these ligands. It controls, for instance, NK cells cytotoxicity against tumor cells. Engagement of NCR3 by BAG6 also promotes myeloid dendritic cells (DC) maturation, both through killing DCs that did not acquire a mature phenotype, and inducing the release by NK cells of TNFA and IFNG that promote DC maturation.</text>
</comment>
<comment type="subunit">
    <text evidence="1">Homodimer in the unliganted form. Interacts with CD3Z. Interacts with and is activated by binding to NCR3LG1. Interacts with and is activated by binding to BAG6. Interacts with and is inhibited by binding to LGALS3.</text>
</comment>
<comment type="subcellular location">
    <subcellularLocation>
        <location evidence="1">Cell membrane</location>
        <topology evidence="2">Single-pass type I membrane protein</topology>
    </subcellularLocation>
</comment>
<comment type="similarity">
    <text evidence="5">Belongs to the natural cytotoxicity receptor (NCR) family.</text>
</comment>